<keyword id="KW-0067">ATP-binding</keyword>
<keyword id="KW-0143">Chaperone</keyword>
<keyword id="KW-0547">Nucleotide-binding</keyword>
<evidence type="ECO:0000250" key="1"/>
<evidence type="ECO:0000305" key="2"/>
<accession>O51883</accession>
<reference key="1">
    <citation type="journal article" date="1998" name="Curr. Microbiol.">
        <title>Sequence analysis of a 34.7-kb DNA segment from the genome of Buchnera aphidicola (endosymbiont of aphids) containing groEL, dnaA, the atp operon, gidA, and rho.</title>
        <authorList>
            <person name="Clark M.A."/>
            <person name="Baumann L."/>
            <person name="Baumann P."/>
        </authorList>
    </citation>
    <scope>NUCLEOTIDE SEQUENCE [GENOMIC DNA]</scope>
</reference>
<reference key="2">
    <citation type="journal article" date="2002" name="Science">
        <title>50 million years of genomic stasis in endosymbiotic bacteria.</title>
        <authorList>
            <person name="Tamas I."/>
            <person name="Klasson L."/>
            <person name="Canbaeck B."/>
            <person name="Naeslund A.K."/>
            <person name="Eriksson A.-S."/>
            <person name="Wernegreen J.J."/>
            <person name="Sandstroem J.P."/>
            <person name="Moran N.A."/>
            <person name="Andersson S.G.E."/>
        </authorList>
    </citation>
    <scope>NUCLEOTIDE SEQUENCE [LARGE SCALE GENOMIC DNA]</scope>
    <source>
        <strain>Sg</strain>
    </source>
</reference>
<protein>
    <recommendedName>
        <fullName>Chaperone protein HscA</fullName>
    </recommendedName>
</protein>
<comment type="function">
    <text evidence="1">Chaperone involved in the maturation of iron-sulfur cluster-containing proteins. Has a low intrinsic ATPase activity which is markedly stimulated by HscB. Involved in the maturation of IscU (By similarity).</text>
</comment>
<comment type="similarity">
    <text evidence="2">Belongs to the heat shock protein 70 family.</text>
</comment>
<organism>
    <name type="scientific">Buchnera aphidicola subsp. Schizaphis graminum (strain Sg)</name>
    <dbReference type="NCBI Taxonomy" id="198804"/>
    <lineage>
        <taxon>Bacteria</taxon>
        <taxon>Pseudomonadati</taxon>
        <taxon>Pseudomonadota</taxon>
        <taxon>Gammaproteobacteria</taxon>
        <taxon>Enterobacterales</taxon>
        <taxon>Erwiniaceae</taxon>
        <taxon>Buchnera</taxon>
    </lineage>
</organism>
<name>HSCA_BUCAP</name>
<proteinExistence type="inferred from homology"/>
<gene>
    <name type="primary">hscA</name>
    <name type="ordered locus">BUsg_580</name>
</gene>
<dbReference type="EMBL" id="AF008210">
    <property type="protein sequence ID" value="AAC38121.1"/>
    <property type="molecule type" value="Genomic_DNA"/>
</dbReference>
<dbReference type="EMBL" id="AE013218">
    <property type="protein sequence ID" value="AAM68114.1"/>
    <property type="molecule type" value="Genomic_DNA"/>
</dbReference>
<dbReference type="RefSeq" id="WP_011054080.1">
    <property type="nucleotide sequence ID" value="NC_004061.1"/>
</dbReference>
<dbReference type="SMR" id="O51883"/>
<dbReference type="STRING" id="198804.BUsg_580"/>
<dbReference type="GeneID" id="93004062"/>
<dbReference type="KEGG" id="bas:BUsg_580"/>
<dbReference type="eggNOG" id="COG0443">
    <property type="taxonomic scope" value="Bacteria"/>
</dbReference>
<dbReference type="HOGENOM" id="CLU_005965_2_4_6"/>
<dbReference type="Proteomes" id="UP000000416">
    <property type="component" value="Chromosome"/>
</dbReference>
<dbReference type="GO" id="GO:0005524">
    <property type="term" value="F:ATP binding"/>
    <property type="evidence" value="ECO:0007669"/>
    <property type="project" value="UniProtKB-KW"/>
</dbReference>
<dbReference type="GO" id="GO:0016887">
    <property type="term" value="F:ATP hydrolysis activity"/>
    <property type="evidence" value="ECO:0007669"/>
    <property type="project" value="UniProtKB-UniRule"/>
</dbReference>
<dbReference type="GO" id="GO:0140662">
    <property type="term" value="F:ATP-dependent protein folding chaperone"/>
    <property type="evidence" value="ECO:0007669"/>
    <property type="project" value="InterPro"/>
</dbReference>
<dbReference type="GO" id="GO:0051082">
    <property type="term" value="F:unfolded protein binding"/>
    <property type="evidence" value="ECO:0007669"/>
    <property type="project" value="InterPro"/>
</dbReference>
<dbReference type="GO" id="GO:0016226">
    <property type="term" value="P:iron-sulfur cluster assembly"/>
    <property type="evidence" value="ECO:0007669"/>
    <property type="project" value="InterPro"/>
</dbReference>
<dbReference type="Gene3D" id="1.20.1270.10">
    <property type="match status" value="1"/>
</dbReference>
<dbReference type="Gene3D" id="3.30.420.40">
    <property type="match status" value="2"/>
</dbReference>
<dbReference type="Gene3D" id="3.90.640.10">
    <property type="entry name" value="Actin, Chain A, domain 4"/>
    <property type="match status" value="1"/>
</dbReference>
<dbReference type="Gene3D" id="2.60.34.10">
    <property type="entry name" value="Substrate Binding Domain Of DNAk, Chain A, domain 1"/>
    <property type="match status" value="1"/>
</dbReference>
<dbReference type="HAMAP" id="MF_00679">
    <property type="entry name" value="HscA"/>
    <property type="match status" value="1"/>
</dbReference>
<dbReference type="InterPro" id="IPR043129">
    <property type="entry name" value="ATPase_NBD"/>
</dbReference>
<dbReference type="InterPro" id="IPR018181">
    <property type="entry name" value="Heat_shock_70_CS"/>
</dbReference>
<dbReference type="InterPro" id="IPR029048">
    <property type="entry name" value="HSP70_C_sf"/>
</dbReference>
<dbReference type="InterPro" id="IPR029047">
    <property type="entry name" value="HSP70_peptide-bd_sf"/>
</dbReference>
<dbReference type="InterPro" id="IPR013126">
    <property type="entry name" value="Hsp_70_fam"/>
</dbReference>
<dbReference type="InterPro" id="IPR010236">
    <property type="entry name" value="ISC_FeS_clus_asmbl_HscA"/>
</dbReference>
<dbReference type="NCBIfam" id="TIGR01991">
    <property type="entry name" value="HscA"/>
    <property type="match status" value="1"/>
</dbReference>
<dbReference type="NCBIfam" id="NF003520">
    <property type="entry name" value="PRK05183.1"/>
    <property type="match status" value="1"/>
</dbReference>
<dbReference type="PANTHER" id="PTHR19375">
    <property type="entry name" value="HEAT SHOCK PROTEIN 70KDA"/>
    <property type="match status" value="1"/>
</dbReference>
<dbReference type="Pfam" id="PF00012">
    <property type="entry name" value="HSP70"/>
    <property type="match status" value="1"/>
</dbReference>
<dbReference type="PRINTS" id="PR00301">
    <property type="entry name" value="HEATSHOCK70"/>
</dbReference>
<dbReference type="SUPFAM" id="SSF53067">
    <property type="entry name" value="Actin-like ATPase domain"/>
    <property type="match status" value="2"/>
</dbReference>
<dbReference type="SUPFAM" id="SSF100934">
    <property type="entry name" value="Heat shock protein 70kD (HSP70), C-terminal subdomain"/>
    <property type="match status" value="1"/>
</dbReference>
<dbReference type="SUPFAM" id="SSF100920">
    <property type="entry name" value="Heat shock protein 70kD (HSP70), peptide-binding domain"/>
    <property type="match status" value="1"/>
</dbReference>
<dbReference type="PROSITE" id="PS00329">
    <property type="entry name" value="HSP70_2"/>
    <property type="match status" value="1"/>
</dbReference>
<dbReference type="PROSITE" id="PS01036">
    <property type="entry name" value="HSP70_3"/>
    <property type="match status" value="1"/>
</dbReference>
<sequence>MVFLKNKVKKKLILGIDFGTTYSLLASVQNERVVLLTDDKKRYLLPSIVNFNKKKPLIGWEAEKKIIKDPINTITSVKRLIGRSIDFIKKEFPILPYVIEDNKDGGILFHTNSGLVTPIDVTSEILKFLKEKSCEFFNKKIDATVITVPAYFDNLQRDSIKKAAISAKINLIRLLNEPTSAAVAYGLQLNTEGLVVVYDLGGGTFDISVLKLNKGIFEVLGTAGHANLGGDDFDTLLSKYIYKKLNLSNQCDNFFQSLLLKKAKEIKIKLTKYEKVEVNFFNWKGIIFRDEFNLIIKDLIQKTLFICSNLLKEIDLKIESIKEVIMVGGSTRVPLVYQEVKKFFRKSPLISINPDQVVAIGAAIQSDMLMKNTIQKRTILLDVTPLSLGIEVMGGFVEKIIFRNTPIPISKTKEFTTAKDNQTIIVIHILQGERELVKDCISLSRFILKDIPSKKAGVVRILVTFEIDTDGLISVKILEKFSHKEKKIQIENVTFLQNKNIHKIIKESTINAKEDYYLRVRKEKKIESKYILDLLNNALQEDRNLITSEELKKIKSHQIKLQKSIDEDDFFSMKLNLKKLEEVSKNFLSLRLKKNMDSFSIKNLSDEIT</sequence>
<feature type="chain" id="PRO_0000078620" description="Chaperone protein HscA">
    <location>
        <begin position="1"/>
        <end position="609"/>
    </location>
</feature>
<feature type="sequence conflict" description="In Ref. 1." evidence="2" ref="1">
    <original>K</original>
    <variation>N</variation>
    <location>
        <position position="342"/>
    </location>
</feature>
<feature type="sequence conflict" description="In Ref. 1." evidence="2" ref="1">
    <original>FR</original>
    <variation>S</variation>
    <location>
        <begin position="344"/>
        <end position="345"/>
    </location>
</feature>